<evidence type="ECO:0000250" key="1"/>
<evidence type="ECO:0000255" key="2"/>
<evidence type="ECO:0000305" key="3"/>
<dbReference type="EC" id="2.1.1.-"/>
<dbReference type="EMBL" id="AM408590">
    <property type="protein sequence ID" value="CAL72969.1"/>
    <property type="molecule type" value="Genomic_DNA"/>
</dbReference>
<dbReference type="RefSeq" id="WP_003414919.1">
    <property type="nucleotide sequence ID" value="NC_008769.1"/>
</dbReference>
<dbReference type="SMR" id="A1KMV3"/>
<dbReference type="KEGG" id="mbb:BCG_2980c"/>
<dbReference type="HOGENOM" id="CLU_063868_0_0_11"/>
<dbReference type="Proteomes" id="UP000001472">
    <property type="component" value="Chromosome"/>
</dbReference>
<dbReference type="GO" id="GO:0005886">
    <property type="term" value="C:plasma membrane"/>
    <property type="evidence" value="ECO:0007669"/>
    <property type="project" value="TreeGrafter"/>
</dbReference>
<dbReference type="GO" id="GO:0008168">
    <property type="term" value="F:methyltransferase activity"/>
    <property type="evidence" value="ECO:0007669"/>
    <property type="project" value="UniProtKB-KW"/>
</dbReference>
<dbReference type="GO" id="GO:0071770">
    <property type="term" value="P:DIM/DIP cell wall layer assembly"/>
    <property type="evidence" value="ECO:0007669"/>
    <property type="project" value="TreeGrafter"/>
</dbReference>
<dbReference type="GO" id="GO:0008610">
    <property type="term" value="P:lipid biosynthetic process"/>
    <property type="evidence" value="ECO:0007669"/>
    <property type="project" value="InterPro"/>
</dbReference>
<dbReference type="GO" id="GO:0032259">
    <property type="term" value="P:methylation"/>
    <property type="evidence" value="ECO:0007669"/>
    <property type="project" value="UniProtKB-KW"/>
</dbReference>
<dbReference type="Gene3D" id="3.40.50.150">
    <property type="entry name" value="Vaccinia Virus protein VP39"/>
    <property type="match status" value="1"/>
</dbReference>
<dbReference type="InterPro" id="IPR054932">
    <property type="entry name" value="RhmsylMtase"/>
</dbReference>
<dbReference type="InterPro" id="IPR007072">
    <property type="entry name" value="RNMT_CmcI"/>
</dbReference>
<dbReference type="InterPro" id="IPR029063">
    <property type="entry name" value="SAM-dependent_MTases_sf"/>
</dbReference>
<dbReference type="NCBIfam" id="NF045824">
    <property type="entry name" value="RhmsylMtase"/>
    <property type="match status" value="1"/>
</dbReference>
<dbReference type="PANTHER" id="PTHR40048">
    <property type="entry name" value="RHAMNOSYL O-METHYLTRANSFERASE"/>
    <property type="match status" value="1"/>
</dbReference>
<dbReference type="PANTHER" id="PTHR40048:SF1">
    <property type="entry name" value="RHAMNOSYL O-METHYLTRANSFERASE"/>
    <property type="match status" value="1"/>
</dbReference>
<dbReference type="Pfam" id="PF04989">
    <property type="entry name" value="RMNT_CmcI"/>
    <property type="match status" value="1"/>
</dbReference>
<dbReference type="SUPFAM" id="SSF53335">
    <property type="entry name" value="S-adenosyl-L-methionine-dependent methyltransferases"/>
    <property type="match status" value="1"/>
</dbReference>
<comment type="function">
    <text evidence="1">Catalyzes the O-methylation of the hydroxyl group located on C-2 of the first rhamnosyl residue linked to the phenolic group of glycosylated phenolphthiocerol dimycocerosates (PGL) and p-hydroxybenzoic acid derivatives (p-HBAD).</text>
</comment>
<comment type="similarity">
    <text evidence="3">Belongs to the rhamnosyl O-methyltransferase family.</text>
</comment>
<reference key="1">
    <citation type="journal article" date="2007" name="Proc. Natl. Acad. Sci. U.S.A.">
        <title>Genome plasticity of BCG and impact on vaccine efficacy.</title>
        <authorList>
            <person name="Brosch R."/>
            <person name="Gordon S.V."/>
            <person name="Garnier T."/>
            <person name="Eiglmeier K."/>
            <person name="Frigui W."/>
            <person name="Valenti P."/>
            <person name="Dos Santos S."/>
            <person name="Duthoy S."/>
            <person name="Lacroix C."/>
            <person name="Garcia-Pelayo C."/>
            <person name="Inwald J.K."/>
            <person name="Golby P."/>
            <person name="Garcia J.N."/>
            <person name="Hewinson R.G."/>
            <person name="Behr M.A."/>
            <person name="Quail M.A."/>
            <person name="Churcher C."/>
            <person name="Barrell B.G."/>
            <person name="Parkhill J."/>
            <person name="Cole S.T."/>
        </authorList>
    </citation>
    <scope>NUCLEOTIDE SEQUENCE [LARGE SCALE GENOMIC DNA]</scope>
    <source>
        <strain>BCG / Pasteur 1173P2</strain>
    </source>
</reference>
<gene>
    <name type="ordered locus">BCG_2980c</name>
</gene>
<name>RNMT_MYCBP</name>
<accession>A1KMV3</accession>
<sequence length="245" mass="27845">MGLVWRSRTSLVGQLIGLVRLVASFAAQLFYRPSDAVAEEYHKWYYGNLVWTKTTYMGINCWKSVSDMWNYQEILSELQPSLVIEFGTRYGGSAVYFANIMRQIGQPFKVLTVDNSHKALDPRARREPDVLFVESSSTDPAIAEQIQRLKNEYPGKIFAILDSDHSMNHVLAEMKLLRPLLSAGDYLVVEDSNINGHPVLPGFGPGPYEAIEAYEDEFPNDYKHDAERENKFGWTSAPNGFLIRN</sequence>
<keyword id="KW-0444">Lipid biosynthesis</keyword>
<keyword id="KW-0443">Lipid metabolism</keyword>
<keyword id="KW-0489">Methyltransferase</keyword>
<keyword id="KW-0732">Signal</keyword>
<keyword id="KW-0808">Transferase</keyword>
<feature type="signal peptide" evidence="2">
    <location>
        <begin position="1"/>
        <end position="38"/>
    </location>
</feature>
<feature type="chain" id="PRO_0000305179" description="Rhamnosyl O-methyltransferase">
    <location>
        <begin position="39"/>
        <end position="245"/>
    </location>
</feature>
<proteinExistence type="inferred from homology"/>
<protein>
    <recommendedName>
        <fullName>Rhamnosyl O-methyltransferase</fullName>
        <ecNumber>2.1.1.-</ecNumber>
    </recommendedName>
</protein>
<organism>
    <name type="scientific">Mycobacterium bovis (strain BCG / Pasteur 1173P2)</name>
    <dbReference type="NCBI Taxonomy" id="410289"/>
    <lineage>
        <taxon>Bacteria</taxon>
        <taxon>Bacillati</taxon>
        <taxon>Actinomycetota</taxon>
        <taxon>Actinomycetes</taxon>
        <taxon>Mycobacteriales</taxon>
        <taxon>Mycobacteriaceae</taxon>
        <taxon>Mycobacterium</taxon>
        <taxon>Mycobacterium tuberculosis complex</taxon>
    </lineage>
</organism>